<keyword id="KW-0903">Direct protein sequencing</keyword>
<keyword id="KW-1015">Disulfide bond</keyword>
<keyword id="KW-0272">Extracellular matrix</keyword>
<keyword id="KW-0325">Glycoprotein</keyword>
<keyword id="KW-0433">Leucine-rich repeat</keyword>
<keyword id="KW-0597">Phosphoprotein</keyword>
<keyword id="KW-0654">Proteoglycan</keyword>
<keyword id="KW-1267">Proteomics identification</keyword>
<keyword id="KW-0873">Pyrrolidone carboxylic acid</keyword>
<keyword id="KW-1185">Reference proteome</keyword>
<keyword id="KW-0677">Repeat</keyword>
<keyword id="KW-0964">Secreted</keyword>
<keyword id="KW-0732">Signal</keyword>
<keyword id="KW-0765">Sulfation</keyword>
<feature type="signal peptide">
    <location>
        <begin position="1"/>
        <end position="18"/>
    </location>
</feature>
<feature type="chain" id="PRO_0000032733" description="Lumican">
    <location>
        <begin position="19"/>
        <end position="338"/>
    </location>
</feature>
<feature type="domain" description="LRRNT">
    <location>
        <begin position="28"/>
        <end position="66"/>
    </location>
</feature>
<feature type="repeat" description="LRR 1">
    <location>
        <begin position="67"/>
        <end position="88"/>
    </location>
</feature>
<feature type="repeat" description="LRR 2">
    <location>
        <begin position="91"/>
        <end position="114"/>
    </location>
</feature>
<feature type="repeat" description="LRR 3">
    <location>
        <begin position="117"/>
        <end position="137"/>
    </location>
</feature>
<feature type="repeat" description="LRR 4">
    <location>
        <begin position="138"/>
        <end position="159"/>
    </location>
</feature>
<feature type="repeat" description="LRR 5">
    <location>
        <begin position="160"/>
        <end position="181"/>
    </location>
</feature>
<feature type="repeat" description="LRR 6">
    <location>
        <begin position="185"/>
        <end position="205"/>
    </location>
</feature>
<feature type="repeat" description="LRR 7">
    <location>
        <begin position="206"/>
        <end position="227"/>
    </location>
</feature>
<feature type="repeat" description="LRR 8">
    <location>
        <begin position="230"/>
        <end position="253"/>
    </location>
</feature>
<feature type="repeat" description="LRR 9">
    <location>
        <begin position="255"/>
        <end position="276"/>
    </location>
</feature>
<feature type="repeat" description="LRR 10">
    <location>
        <begin position="277"/>
        <end position="296"/>
    </location>
</feature>
<feature type="repeat" description="LRR 11">
    <location>
        <begin position="305"/>
        <end position="326"/>
    </location>
</feature>
<feature type="modified residue" description="Pyrrolidone carboxylic acid" evidence="6">
    <location>
        <position position="19"/>
    </location>
</feature>
<feature type="modified residue" description="Sulfotyrosine" evidence="2">
    <location>
        <position position="20"/>
    </location>
</feature>
<feature type="modified residue" description="Sulfotyrosine" evidence="2">
    <location>
        <position position="21"/>
    </location>
</feature>
<feature type="modified residue" description="Sulfotyrosine" evidence="2">
    <location>
        <position position="23"/>
    </location>
</feature>
<feature type="modified residue" description="Sulfotyrosine" evidence="2">
    <location>
        <position position="30"/>
    </location>
</feature>
<feature type="modified residue" description="Phosphoserine" evidence="3">
    <location>
        <position position="304"/>
    </location>
</feature>
<feature type="glycosylation site" description="N-linked (GlcNAc...) (keratan sulfate) asparagine" evidence="7 8 9">
    <location>
        <position position="88"/>
    </location>
</feature>
<feature type="glycosylation site" description="N-linked (GlcNAc...) (keratan sulfate) asparagine" evidence="5">
    <location>
        <position position="127"/>
    </location>
</feature>
<feature type="glycosylation site" description="N-linked (GlcNAc...) (keratan sulfate) asparagine" evidence="7 8 9">
    <location>
        <position position="160"/>
    </location>
</feature>
<feature type="glycosylation site" description="N-linked (GlcNAc...) (keratan sulfate) asparagine" evidence="5">
    <location>
        <position position="252"/>
    </location>
</feature>
<feature type="disulfide bond" evidence="1">
    <location>
        <begin position="295"/>
        <end position="328"/>
    </location>
</feature>
<feature type="sequence variant" id="VAR_065763" description="Found in patients with amyotrophic lateral sclerosis; dbSNP:rs147975710." evidence="10">
    <original>L</original>
    <variation>P</variation>
    <location>
        <position position="199"/>
    </location>
</feature>
<feature type="sequence conflict" description="In Ref. 1; AAA85268." evidence="11" ref="1">
    <original>L</original>
    <variation>P</variation>
    <location>
        <position position="27"/>
    </location>
</feature>
<feature type="sequence conflict" description="In Ref. 1; AAA85268." evidence="11" ref="1">
    <original>L</original>
    <variation>V</variation>
    <location>
        <position position="101"/>
    </location>
</feature>
<protein>
    <recommendedName>
        <fullName>Lumican</fullName>
    </recommendedName>
    <alternativeName>
        <fullName>Keratan sulfate proteoglycan lumican</fullName>
        <shortName>KSPG lumican</shortName>
    </alternativeName>
</protein>
<gene>
    <name type="primary">LUM</name>
    <name type="synonym">LDC</name>
    <name type="synonym">SLRR2D</name>
</gene>
<reference key="1">
    <citation type="journal article" date="1995" name="J. Biol. Chem.">
        <title>The human lumican gene. Organization, chromosomal location, and expression in articular cartilage.</title>
        <authorList>
            <person name="Grover J."/>
            <person name="Chen X.-N."/>
            <person name="Korenberg J.R."/>
            <person name="Roughley P.J."/>
        </authorList>
    </citation>
    <scope>NUCLEOTIDE SEQUENCE [MRNA]</scope>
    <source>
        <tissue>Cartilage</tissue>
        <tissue>Intestine</tissue>
        <tissue>Placenta</tissue>
    </source>
</reference>
<reference key="2">
    <citation type="journal article" date="1995" name="Genomics">
        <title>Primary structure of human lumican (keratan sulfate proteoglycan) and localization of the gene (LUM) to chromosome 12q21.3-q22.</title>
        <authorList>
            <person name="Chakravarti S."/>
            <person name="Stallings R.L."/>
            <person name="Sundar-Raj N."/>
            <person name="Cornuet P.K."/>
            <person name="Hassell J.R."/>
        </authorList>
    </citation>
    <scope>NUCLEOTIDE SEQUENCE [MRNA]</scope>
    <scope>PARTIAL PROTEIN SEQUENCE</scope>
    <source>
        <tissue>Cornea</tissue>
    </source>
</reference>
<reference key="3">
    <citation type="submission" date="2003-05" db="EMBL/GenBank/DDBJ databases">
        <title>Cloning of human full-length CDSs in BD Creator(TM) system donor vector.</title>
        <authorList>
            <person name="Kalnine N."/>
            <person name="Chen X."/>
            <person name="Rolfs A."/>
            <person name="Halleck A."/>
            <person name="Hines L."/>
            <person name="Eisenstein S."/>
            <person name="Koundinya M."/>
            <person name="Raphael J."/>
            <person name="Moreira D."/>
            <person name="Kelley T."/>
            <person name="LaBaer J."/>
            <person name="Lin Y."/>
            <person name="Phelan M."/>
            <person name="Farmer A."/>
        </authorList>
    </citation>
    <scope>NUCLEOTIDE SEQUENCE [LARGE SCALE MRNA]</scope>
</reference>
<reference key="4">
    <citation type="journal article" date="2004" name="Nat. Genet.">
        <title>Complete sequencing and characterization of 21,243 full-length human cDNAs.</title>
        <authorList>
            <person name="Ota T."/>
            <person name="Suzuki Y."/>
            <person name="Nishikawa T."/>
            <person name="Otsuki T."/>
            <person name="Sugiyama T."/>
            <person name="Irie R."/>
            <person name="Wakamatsu A."/>
            <person name="Hayashi K."/>
            <person name="Sato H."/>
            <person name="Nagai K."/>
            <person name="Kimura K."/>
            <person name="Makita H."/>
            <person name="Sekine M."/>
            <person name="Obayashi M."/>
            <person name="Nishi T."/>
            <person name="Shibahara T."/>
            <person name="Tanaka T."/>
            <person name="Ishii S."/>
            <person name="Yamamoto J."/>
            <person name="Saito K."/>
            <person name="Kawai Y."/>
            <person name="Isono Y."/>
            <person name="Nakamura Y."/>
            <person name="Nagahari K."/>
            <person name="Murakami K."/>
            <person name="Yasuda T."/>
            <person name="Iwayanagi T."/>
            <person name="Wagatsuma M."/>
            <person name="Shiratori A."/>
            <person name="Sudo H."/>
            <person name="Hosoiri T."/>
            <person name="Kaku Y."/>
            <person name="Kodaira H."/>
            <person name="Kondo H."/>
            <person name="Sugawara M."/>
            <person name="Takahashi M."/>
            <person name="Kanda K."/>
            <person name="Yokoi T."/>
            <person name="Furuya T."/>
            <person name="Kikkawa E."/>
            <person name="Omura Y."/>
            <person name="Abe K."/>
            <person name="Kamihara K."/>
            <person name="Katsuta N."/>
            <person name="Sato K."/>
            <person name="Tanikawa M."/>
            <person name="Yamazaki M."/>
            <person name="Ninomiya K."/>
            <person name="Ishibashi T."/>
            <person name="Yamashita H."/>
            <person name="Murakawa K."/>
            <person name="Fujimori K."/>
            <person name="Tanai H."/>
            <person name="Kimata M."/>
            <person name="Watanabe M."/>
            <person name="Hiraoka S."/>
            <person name="Chiba Y."/>
            <person name="Ishida S."/>
            <person name="Ono Y."/>
            <person name="Takiguchi S."/>
            <person name="Watanabe S."/>
            <person name="Yosida M."/>
            <person name="Hotuta T."/>
            <person name="Kusano J."/>
            <person name="Kanehori K."/>
            <person name="Takahashi-Fujii A."/>
            <person name="Hara H."/>
            <person name="Tanase T.-O."/>
            <person name="Nomura Y."/>
            <person name="Togiya S."/>
            <person name="Komai F."/>
            <person name="Hara R."/>
            <person name="Takeuchi K."/>
            <person name="Arita M."/>
            <person name="Imose N."/>
            <person name="Musashino K."/>
            <person name="Yuuki H."/>
            <person name="Oshima A."/>
            <person name="Sasaki N."/>
            <person name="Aotsuka S."/>
            <person name="Yoshikawa Y."/>
            <person name="Matsunawa H."/>
            <person name="Ichihara T."/>
            <person name="Shiohata N."/>
            <person name="Sano S."/>
            <person name="Moriya S."/>
            <person name="Momiyama H."/>
            <person name="Satoh N."/>
            <person name="Takami S."/>
            <person name="Terashima Y."/>
            <person name="Suzuki O."/>
            <person name="Nakagawa S."/>
            <person name="Senoh A."/>
            <person name="Mizoguchi H."/>
            <person name="Goto Y."/>
            <person name="Shimizu F."/>
            <person name="Wakebe H."/>
            <person name="Hishigaki H."/>
            <person name="Watanabe T."/>
            <person name="Sugiyama A."/>
            <person name="Takemoto M."/>
            <person name="Kawakami B."/>
            <person name="Yamazaki M."/>
            <person name="Watanabe K."/>
            <person name="Kumagai A."/>
            <person name="Itakura S."/>
            <person name="Fukuzumi Y."/>
            <person name="Fujimori Y."/>
            <person name="Komiyama M."/>
            <person name="Tashiro H."/>
            <person name="Tanigami A."/>
            <person name="Fujiwara T."/>
            <person name="Ono T."/>
            <person name="Yamada K."/>
            <person name="Fujii Y."/>
            <person name="Ozaki K."/>
            <person name="Hirao M."/>
            <person name="Ohmori Y."/>
            <person name="Kawabata A."/>
            <person name="Hikiji T."/>
            <person name="Kobatake N."/>
            <person name="Inagaki H."/>
            <person name="Ikema Y."/>
            <person name="Okamoto S."/>
            <person name="Okitani R."/>
            <person name="Kawakami T."/>
            <person name="Noguchi S."/>
            <person name="Itoh T."/>
            <person name="Shigeta K."/>
            <person name="Senba T."/>
            <person name="Matsumura K."/>
            <person name="Nakajima Y."/>
            <person name="Mizuno T."/>
            <person name="Morinaga M."/>
            <person name="Sasaki M."/>
            <person name="Togashi T."/>
            <person name="Oyama M."/>
            <person name="Hata H."/>
            <person name="Watanabe M."/>
            <person name="Komatsu T."/>
            <person name="Mizushima-Sugano J."/>
            <person name="Satoh T."/>
            <person name="Shirai Y."/>
            <person name="Takahashi Y."/>
            <person name="Nakagawa K."/>
            <person name="Okumura K."/>
            <person name="Nagase T."/>
            <person name="Nomura N."/>
            <person name="Kikuchi H."/>
            <person name="Masuho Y."/>
            <person name="Yamashita R."/>
            <person name="Nakai K."/>
            <person name="Yada T."/>
            <person name="Nakamura Y."/>
            <person name="Ohara O."/>
            <person name="Isogai T."/>
            <person name="Sugano S."/>
        </authorList>
    </citation>
    <scope>NUCLEOTIDE SEQUENCE [LARGE SCALE MRNA]</scope>
</reference>
<reference key="5">
    <citation type="submission" date="2005-07" db="EMBL/GenBank/DDBJ databases">
        <authorList>
            <person name="Mural R.J."/>
            <person name="Istrail S."/>
            <person name="Sutton G.G."/>
            <person name="Florea L."/>
            <person name="Halpern A.L."/>
            <person name="Mobarry C.M."/>
            <person name="Lippert R."/>
            <person name="Walenz B."/>
            <person name="Shatkay H."/>
            <person name="Dew I."/>
            <person name="Miller J.R."/>
            <person name="Flanigan M.J."/>
            <person name="Edwards N.J."/>
            <person name="Bolanos R."/>
            <person name="Fasulo D."/>
            <person name="Halldorsson B.V."/>
            <person name="Hannenhalli S."/>
            <person name="Turner R."/>
            <person name="Yooseph S."/>
            <person name="Lu F."/>
            <person name="Nusskern D.R."/>
            <person name="Shue B.C."/>
            <person name="Zheng X.H."/>
            <person name="Zhong F."/>
            <person name="Delcher A.L."/>
            <person name="Huson D.H."/>
            <person name="Kravitz S.A."/>
            <person name="Mouchard L."/>
            <person name="Reinert K."/>
            <person name="Remington K.A."/>
            <person name="Clark A.G."/>
            <person name="Waterman M.S."/>
            <person name="Eichler E.E."/>
            <person name="Adams M.D."/>
            <person name="Hunkapiller M.W."/>
            <person name="Myers E.W."/>
            <person name="Venter J.C."/>
        </authorList>
    </citation>
    <scope>NUCLEOTIDE SEQUENCE [LARGE SCALE GENOMIC DNA]</scope>
</reference>
<reference key="6">
    <citation type="journal article" date="2004" name="Genome Res.">
        <title>The status, quality, and expansion of the NIH full-length cDNA project: the Mammalian Gene Collection (MGC).</title>
        <authorList>
            <consortium name="The MGC Project Team"/>
        </authorList>
    </citation>
    <scope>NUCLEOTIDE SEQUENCE [LARGE SCALE MRNA]</scope>
    <source>
        <tissue>Lung</tissue>
        <tissue>Prostate</tissue>
    </source>
</reference>
<reference key="7">
    <citation type="journal article" date="2004" name="J. Biol. Chem.">
        <title>Identification of tyrosine sulfation in extracellular leucine-rich repeat proteins using mass spectrometry.</title>
        <authorList>
            <person name="Onnerfjord P."/>
            <person name="Heathfield T.F."/>
            <person name="Heinegaard D."/>
        </authorList>
    </citation>
    <scope>SULFATION</scope>
    <scope>PYROGLUTAMATE FORMATION AT GLN-19</scope>
    <scope>IDENTIFICATION BY MASS SPECTROMETRY</scope>
</reference>
<reference key="8">
    <citation type="journal article" date="2004" name="Proteomics">
        <title>Screening for N-glycosylated proteins by liquid chromatography mass spectrometry.</title>
        <authorList>
            <person name="Bunkenborg J."/>
            <person name="Pilch B.J."/>
            <person name="Podtelejnikov A.V."/>
            <person name="Wisniewski J.R."/>
        </authorList>
    </citation>
    <scope>GLYCOSYLATION [LARGE SCALE ANALYSIS] AT ASN-88 AND ASN-160</scope>
    <source>
        <tissue>Plasma</tissue>
    </source>
</reference>
<reference key="9">
    <citation type="journal article" date="2005" name="J. Proteome Res.">
        <title>Human plasma N-glycoproteome analysis by immunoaffinity subtraction, hydrazide chemistry, and mass spectrometry.</title>
        <authorList>
            <person name="Liu T."/>
            <person name="Qian W.-J."/>
            <person name="Gritsenko M.A."/>
            <person name="Camp D.G. II"/>
            <person name="Monroe M.E."/>
            <person name="Moore R.J."/>
            <person name="Smith R.D."/>
        </authorList>
    </citation>
    <scope>GLYCOSYLATION [LARGE SCALE ANALYSIS] AT ASN-88; ASN-127; ASN-160 AND ASN-252</scope>
    <source>
        <tissue>Plasma</tissue>
    </source>
</reference>
<reference key="10">
    <citation type="journal article" date="2009" name="J. Proteome Res.">
        <title>Glycoproteomics analysis of human liver tissue by combination of multiple enzyme digestion and hydrazide chemistry.</title>
        <authorList>
            <person name="Chen R."/>
            <person name="Jiang X."/>
            <person name="Sun D."/>
            <person name="Han G."/>
            <person name="Wang F."/>
            <person name="Ye M."/>
            <person name="Wang L."/>
            <person name="Zou H."/>
        </authorList>
    </citation>
    <scope>GLYCOSYLATION [LARGE SCALE ANALYSIS] AT ASN-88; ASN-127; ASN-160 AND ASN-252</scope>
    <source>
        <tissue>Liver</tissue>
    </source>
</reference>
<reference key="11">
    <citation type="journal article" date="2014" name="J. Proteomics">
        <title>An enzyme assisted RP-RPLC approach for in-depth analysis of human liver phosphoproteome.</title>
        <authorList>
            <person name="Bian Y."/>
            <person name="Song C."/>
            <person name="Cheng K."/>
            <person name="Dong M."/>
            <person name="Wang F."/>
            <person name="Huang J."/>
            <person name="Sun D."/>
            <person name="Wang L."/>
            <person name="Ye M."/>
            <person name="Zou H."/>
        </authorList>
    </citation>
    <scope>IDENTIFICATION BY MASS SPECTROMETRY [LARGE SCALE ANALYSIS]</scope>
    <source>
        <tissue>Liver</tissue>
    </source>
</reference>
<reference key="12">
    <citation type="journal article" date="2011" name="Arch. Neurol.">
        <title>Resequencing of 29 candidate genes in patients with familial and sporadic amyotrophic lateral sclerosis.</title>
        <authorList>
            <person name="Daoud H."/>
            <person name="Valdmanis P.N."/>
            <person name="Gros-Louis F."/>
            <person name="Belzil V."/>
            <person name="Spiegelman D."/>
            <person name="Henrion E."/>
            <person name="Diallo O."/>
            <person name="Desjarlais A."/>
            <person name="Gauthier J."/>
            <person name="Camu W."/>
            <person name="Dion P.A."/>
            <person name="Rouleau G.A."/>
        </authorList>
    </citation>
    <scope>VARIANT PRO-199</scope>
</reference>
<comment type="subunit">
    <text evidence="1">Binds to laminin.</text>
</comment>
<comment type="interaction">
    <interactant intactId="EBI-725780">
        <id>P51884</id>
    </interactant>
    <interactant intactId="EBI-399080">
        <id>Q92993</id>
        <label>KAT5</label>
    </interactant>
    <organismsDiffer>false</organismsDiffer>
    <experiments>3</experiments>
</comment>
<comment type="interaction">
    <interactant intactId="EBI-725780">
        <id>P51884</id>
    </interactant>
    <interactant intactId="EBI-11742507">
        <id>Q8TAP4-4</id>
        <label>LMO3</label>
    </interactant>
    <organismsDiffer>false</organismsDiffer>
    <experiments>3</experiments>
</comment>
<comment type="interaction">
    <interactant intactId="EBI-725780">
        <id>P51884</id>
    </interactant>
    <interactant intactId="EBI-992788">
        <id>P50281</id>
        <label>MMP14</label>
    </interactant>
    <organismsDiffer>false</organismsDiffer>
    <experiments>2</experiments>
</comment>
<comment type="interaction">
    <interactant intactId="EBI-725780">
        <id>P51884</id>
    </interactant>
    <interactant intactId="EBI-1383528">
        <id>P17252</id>
        <label>PRKCA</label>
    </interactant>
    <organismsDiffer>false</organismsDiffer>
    <experiments>3</experiments>
</comment>
<comment type="interaction">
    <interactant intactId="EBI-725780">
        <id>P51884</id>
    </interactant>
    <interactant intactId="EBI-9090795">
        <id>Q15047-2</id>
        <label>SETDB1</label>
    </interactant>
    <organismsDiffer>false</organismsDiffer>
    <experiments>3</experiments>
</comment>
<comment type="interaction">
    <interactant intactId="EBI-725780">
        <id>P51884</id>
    </interactant>
    <interactant intactId="EBI-359832">
        <id>P61981</id>
        <label>YWHAG</label>
    </interactant>
    <organismsDiffer>false</organismsDiffer>
    <experiments>3</experiments>
</comment>
<comment type="subcellular location">
    <subcellularLocation>
        <location evidence="1">Secreted</location>
        <location evidence="1">Extracellular space</location>
        <location evidence="1">Extracellular matrix</location>
    </subcellularLocation>
</comment>
<comment type="tissue specificity">
    <text>Cornea and other tissues.</text>
</comment>
<comment type="developmental stage">
    <text>Present in the extracellular matrix of human articular cartilage at all ages, although its abundance is far greater in the adult. In the adult cartilage lumican exists predominantly in a glycoprotein form lacking keratan sulfate, whereas the juvenile form of the molecule is a proteoglycan.</text>
</comment>
<comment type="PTM">
    <text evidence="6">Sulfated on tyrosine residue(s).</text>
</comment>
<comment type="PTM">
    <text evidence="4">Contains keratan sulfate.</text>
</comment>
<comment type="similarity">
    <text evidence="11">Belongs to the small leucine-rich proteoglycan (SLRP) family. SLRP class II subfamily.</text>
</comment>
<accession>P51884</accession>
<accession>B2R6R5</accession>
<accession>Q96QM7</accession>
<proteinExistence type="evidence at protein level"/>
<dbReference type="EMBL" id="U18728">
    <property type="protein sequence ID" value="AAA85268.1"/>
    <property type="molecule type" value="mRNA"/>
</dbReference>
<dbReference type="EMBL" id="U21128">
    <property type="protein sequence ID" value="AAA91639.1"/>
    <property type="molecule type" value="mRNA"/>
</dbReference>
<dbReference type="EMBL" id="BT006707">
    <property type="protein sequence ID" value="AAP35353.1"/>
    <property type="molecule type" value="mRNA"/>
</dbReference>
<dbReference type="EMBL" id="AK312682">
    <property type="protein sequence ID" value="BAG35562.1"/>
    <property type="molecule type" value="mRNA"/>
</dbReference>
<dbReference type="EMBL" id="CH471054">
    <property type="protein sequence ID" value="EAW97449.1"/>
    <property type="molecule type" value="Genomic_DNA"/>
</dbReference>
<dbReference type="EMBL" id="BC007038">
    <property type="protein sequence ID" value="AAH07038.1"/>
    <property type="molecule type" value="mRNA"/>
</dbReference>
<dbReference type="EMBL" id="BC035997">
    <property type="protein sequence ID" value="AAH35997.1"/>
    <property type="molecule type" value="mRNA"/>
</dbReference>
<dbReference type="CCDS" id="CCDS9038.1"/>
<dbReference type="RefSeq" id="NP_002336.1">
    <property type="nucleotide sequence ID" value="NM_002345.4"/>
</dbReference>
<dbReference type="SMR" id="P51884"/>
<dbReference type="BioGRID" id="110238">
    <property type="interactions" value="30"/>
</dbReference>
<dbReference type="FunCoup" id="P51884">
    <property type="interactions" value="72"/>
</dbReference>
<dbReference type="IntAct" id="P51884">
    <property type="interactions" value="20"/>
</dbReference>
<dbReference type="MINT" id="P51884"/>
<dbReference type="STRING" id="9606.ENSP00000266718"/>
<dbReference type="DrugBank" id="DB09130">
    <property type="generic name" value="Copper"/>
</dbReference>
<dbReference type="GlyConnect" id="1470">
    <property type="glycosylation" value="87 N-Linked glycans (4 sites)"/>
</dbReference>
<dbReference type="GlyCosmos" id="P51884">
    <property type="glycosylation" value="7 sites, 99 glycans"/>
</dbReference>
<dbReference type="GlyGen" id="P51884">
    <property type="glycosylation" value="8 sites, 293 N-linked glycans (4 sites), 2 O-linked glycans (3 sites)"/>
</dbReference>
<dbReference type="iPTMnet" id="P51884"/>
<dbReference type="PhosphoSitePlus" id="P51884"/>
<dbReference type="BioMuta" id="LUM"/>
<dbReference type="DMDM" id="20141464"/>
<dbReference type="jPOST" id="P51884"/>
<dbReference type="MassIVE" id="P51884"/>
<dbReference type="PaxDb" id="9606-ENSP00000266718"/>
<dbReference type="PeptideAtlas" id="P51884"/>
<dbReference type="ProteomicsDB" id="56448"/>
<dbReference type="TopDownProteomics" id="P51884"/>
<dbReference type="ABCD" id="P51884">
    <property type="antibodies" value="7 sequenced antibodies"/>
</dbReference>
<dbReference type="Antibodypedia" id="867">
    <property type="antibodies" value="375 antibodies from 34 providers"/>
</dbReference>
<dbReference type="DNASU" id="4060"/>
<dbReference type="Ensembl" id="ENST00000266718.5">
    <property type="protein sequence ID" value="ENSP00000266718.4"/>
    <property type="gene ID" value="ENSG00000139329.5"/>
</dbReference>
<dbReference type="GeneID" id="4060"/>
<dbReference type="KEGG" id="hsa:4060"/>
<dbReference type="MANE-Select" id="ENST00000266718.5">
    <property type="protein sequence ID" value="ENSP00000266718.4"/>
    <property type="RefSeq nucleotide sequence ID" value="NM_002345.4"/>
    <property type="RefSeq protein sequence ID" value="NP_002336.1"/>
</dbReference>
<dbReference type="UCSC" id="uc001tbm.4">
    <property type="organism name" value="human"/>
</dbReference>
<dbReference type="AGR" id="HGNC:6724"/>
<dbReference type="CTD" id="4060"/>
<dbReference type="DisGeNET" id="4060"/>
<dbReference type="GeneCards" id="LUM"/>
<dbReference type="HGNC" id="HGNC:6724">
    <property type="gene designation" value="LUM"/>
</dbReference>
<dbReference type="HPA" id="ENSG00000139329">
    <property type="expression patterns" value="Tissue enhanced (gallbladder, placenta)"/>
</dbReference>
<dbReference type="MIM" id="600616">
    <property type="type" value="gene"/>
</dbReference>
<dbReference type="neXtProt" id="NX_P51884"/>
<dbReference type="OpenTargets" id="ENSG00000139329"/>
<dbReference type="PharmGKB" id="PA30486"/>
<dbReference type="VEuPathDB" id="HostDB:ENSG00000139329"/>
<dbReference type="eggNOG" id="KOG0619">
    <property type="taxonomic scope" value="Eukaryota"/>
</dbReference>
<dbReference type="GeneTree" id="ENSGT00940000158177"/>
<dbReference type="HOGENOM" id="CLU_000288_186_4_1"/>
<dbReference type="InParanoid" id="P51884"/>
<dbReference type="OMA" id="DCPINFP"/>
<dbReference type="OrthoDB" id="6359842at2759"/>
<dbReference type="PAN-GO" id="P51884">
    <property type="GO annotations" value="2 GO annotations based on evolutionary models"/>
</dbReference>
<dbReference type="PhylomeDB" id="P51884"/>
<dbReference type="TreeFam" id="TF334562"/>
<dbReference type="PathwayCommons" id="P51884"/>
<dbReference type="Reactome" id="R-HSA-2022854">
    <property type="pathway name" value="Keratan sulfate biosynthesis"/>
</dbReference>
<dbReference type="Reactome" id="R-HSA-2022857">
    <property type="pathway name" value="Keratan sulfate degradation"/>
</dbReference>
<dbReference type="Reactome" id="R-HSA-216083">
    <property type="pathway name" value="Integrin cell surface interactions"/>
</dbReference>
<dbReference type="Reactome" id="R-HSA-3000178">
    <property type="pathway name" value="ECM proteoglycans"/>
</dbReference>
<dbReference type="Reactome" id="R-HSA-3656225">
    <property type="pathway name" value="Defective CHST6 causes MCDC1"/>
</dbReference>
<dbReference type="Reactome" id="R-HSA-3656243">
    <property type="pathway name" value="Defective ST3GAL3 causes MCT12 and EIEE15"/>
</dbReference>
<dbReference type="Reactome" id="R-HSA-3656244">
    <property type="pathway name" value="Defective B4GALT1 causes B4GALT1-CDG (CDG-2d)"/>
</dbReference>
<dbReference type="SignaLink" id="P51884"/>
<dbReference type="BioGRID-ORCS" id="4060">
    <property type="hits" value="11 hits in 1142 CRISPR screens"/>
</dbReference>
<dbReference type="ChiTaRS" id="LUM">
    <property type="organism name" value="human"/>
</dbReference>
<dbReference type="GeneWiki" id="LUM"/>
<dbReference type="GenomeRNAi" id="4060"/>
<dbReference type="Pharos" id="P51884">
    <property type="development level" value="Tbio"/>
</dbReference>
<dbReference type="PRO" id="PR:P51884"/>
<dbReference type="Proteomes" id="UP000005640">
    <property type="component" value="Chromosome 12"/>
</dbReference>
<dbReference type="RNAct" id="P51884">
    <property type="molecule type" value="protein"/>
</dbReference>
<dbReference type="Bgee" id="ENSG00000139329">
    <property type="expression patterns" value="Expressed in gall bladder and 182 other cell types or tissues"/>
</dbReference>
<dbReference type="ExpressionAtlas" id="P51884">
    <property type="expression patterns" value="baseline and differential"/>
</dbReference>
<dbReference type="GO" id="GO:0062023">
    <property type="term" value="C:collagen-containing extracellular matrix"/>
    <property type="evidence" value="ECO:0007005"/>
    <property type="project" value="BHF-UCL"/>
</dbReference>
<dbReference type="GO" id="GO:0070062">
    <property type="term" value="C:extracellular exosome"/>
    <property type="evidence" value="ECO:0007005"/>
    <property type="project" value="UniProtKB"/>
</dbReference>
<dbReference type="GO" id="GO:0031012">
    <property type="term" value="C:extracellular matrix"/>
    <property type="evidence" value="ECO:0000304"/>
    <property type="project" value="ProtInc"/>
</dbReference>
<dbReference type="GO" id="GO:0005576">
    <property type="term" value="C:extracellular region"/>
    <property type="evidence" value="ECO:0007005"/>
    <property type="project" value="BHF-UCL"/>
</dbReference>
<dbReference type="GO" id="GO:0005615">
    <property type="term" value="C:extracellular space"/>
    <property type="evidence" value="ECO:0007005"/>
    <property type="project" value="BHF-UCL"/>
</dbReference>
<dbReference type="GO" id="GO:0005583">
    <property type="term" value="C:fibrillar collagen trimer"/>
    <property type="evidence" value="ECO:0000314"/>
    <property type="project" value="UniProtKB"/>
</dbReference>
<dbReference type="GO" id="GO:0005796">
    <property type="term" value="C:Golgi lumen"/>
    <property type="evidence" value="ECO:0000304"/>
    <property type="project" value="Reactome"/>
</dbReference>
<dbReference type="GO" id="GO:0043202">
    <property type="term" value="C:lysosomal lumen"/>
    <property type="evidence" value="ECO:0000304"/>
    <property type="project" value="Reactome"/>
</dbReference>
<dbReference type="GO" id="GO:0005518">
    <property type="term" value="F:collagen binding"/>
    <property type="evidence" value="ECO:0000314"/>
    <property type="project" value="UniProtKB"/>
</dbReference>
<dbReference type="GO" id="GO:0005201">
    <property type="term" value="F:extracellular matrix structural constituent"/>
    <property type="evidence" value="ECO:0000303"/>
    <property type="project" value="UniProtKB"/>
</dbReference>
<dbReference type="GO" id="GO:0030021">
    <property type="term" value="F:extracellular matrix structural constituent conferring compression resistance"/>
    <property type="evidence" value="ECO:0000250"/>
    <property type="project" value="BHF-UCL"/>
</dbReference>
<dbReference type="GO" id="GO:0051216">
    <property type="term" value="P:cartilage development"/>
    <property type="evidence" value="ECO:0007669"/>
    <property type="project" value="Ensembl"/>
</dbReference>
<dbReference type="GO" id="GO:0030199">
    <property type="term" value="P:collagen fibril organization"/>
    <property type="evidence" value="ECO:0000303"/>
    <property type="project" value="UniProtKB"/>
</dbReference>
<dbReference type="GO" id="GO:0045944">
    <property type="term" value="P:positive regulation of transcription by RNA polymerase II"/>
    <property type="evidence" value="ECO:0007669"/>
    <property type="project" value="Ensembl"/>
</dbReference>
<dbReference type="GO" id="GO:0032914">
    <property type="term" value="P:positive regulation of transforming growth factor beta1 production"/>
    <property type="evidence" value="ECO:0007669"/>
    <property type="project" value="Ensembl"/>
</dbReference>
<dbReference type="GO" id="GO:0070848">
    <property type="term" value="P:response to growth factor"/>
    <property type="evidence" value="ECO:0007669"/>
    <property type="project" value="Ensembl"/>
</dbReference>
<dbReference type="GO" id="GO:0007601">
    <property type="term" value="P:visual perception"/>
    <property type="evidence" value="ECO:0000304"/>
    <property type="project" value="ProtInc"/>
</dbReference>
<dbReference type="FunFam" id="3.80.10.10:FF:000063">
    <property type="entry name" value="Lumican"/>
    <property type="match status" value="1"/>
</dbReference>
<dbReference type="FunFam" id="3.80.10.10:FF:000073">
    <property type="entry name" value="Lumican"/>
    <property type="match status" value="1"/>
</dbReference>
<dbReference type="FunFam" id="3.80.10.10:FF:000151">
    <property type="entry name" value="Lumican"/>
    <property type="match status" value="1"/>
</dbReference>
<dbReference type="Gene3D" id="3.80.10.10">
    <property type="entry name" value="Ribonuclease Inhibitor"/>
    <property type="match status" value="3"/>
</dbReference>
<dbReference type="InterPro" id="IPR001611">
    <property type="entry name" value="Leu-rich_rpt"/>
</dbReference>
<dbReference type="InterPro" id="IPR003591">
    <property type="entry name" value="Leu-rich_rpt_typical-subtyp"/>
</dbReference>
<dbReference type="InterPro" id="IPR032675">
    <property type="entry name" value="LRR_dom_sf"/>
</dbReference>
<dbReference type="InterPro" id="IPR000372">
    <property type="entry name" value="LRRNT"/>
</dbReference>
<dbReference type="InterPro" id="IPR050333">
    <property type="entry name" value="SLRP"/>
</dbReference>
<dbReference type="PANTHER" id="PTHR45712">
    <property type="entry name" value="AGAP008170-PA"/>
    <property type="match status" value="1"/>
</dbReference>
<dbReference type="PANTHER" id="PTHR45712:SF6">
    <property type="entry name" value="LUMICAN"/>
    <property type="match status" value="1"/>
</dbReference>
<dbReference type="Pfam" id="PF13516">
    <property type="entry name" value="LRR_6"/>
    <property type="match status" value="1"/>
</dbReference>
<dbReference type="Pfam" id="PF13855">
    <property type="entry name" value="LRR_8"/>
    <property type="match status" value="3"/>
</dbReference>
<dbReference type="Pfam" id="PF01462">
    <property type="entry name" value="LRRNT"/>
    <property type="match status" value="1"/>
</dbReference>
<dbReference type="PRINTS" id="PR00019">
    <property type="entry name" value="LEURICHRPT"/>
</dbReference>
<dbReference type="SMART" id="SM00364">
    <property type="entry name" value="LRR_BAC"/>
    <property type="match status" value="5"/>
</dbReference>
<dbReference type="SMART" id="SM00365">
    <property type="entry name" value="LRR_SD22"/>
    <property type="match status" value="4"/>
</dbReference>
<dbReference type="SMART" id="SM00369">
    <property type="entry name" value="LRR_TYP"/>
    <property type="match status" value="8"/>
</dbReference>
<dbReference type="SMART" id="SM00013">
    <property type="entry name" value="LRRNT"/>
    <property type="match status" value="1"/>
</dbReference>
<dbReference type="SUPFAM" id="SSF52058">
    <property type="entry name" value="L domain-like"/>
    <property type="match status" value="1"/>
</dbReference>
<dbReference type="PROSITE" id="PS51450">
    <property type="entry name" value="LRR"/>
    <property type="match status" value="10"/>
</dbReference>
<evidence type="ECO:0000250" key="1"/>
<evidence type="ECO:0000250" key="2">
    <source>
        <dbReference type="UniProtKB" id="P51885"/>
    </source>
</evidence>
<evidence type="ECO:0000250" key="3">
    <source>
        <dbReference type="UniProtKB" id="P51886"/>
    </source>
</evidence>
<evidence type="ECO:0000250" key="4">
    <source>
        <dbReference type="UniProtKB" id="Q05443"/>
    </source>
</evidence>
<evidence type="ECO:0000255" key="5"/>
<evidence type="ECO:0000269" key="6">
    <source>
    </source>
</evidence>
<evidence type="ECO:0000269" key="7">
    <source>
    </source>
</evidence>
<evidence type="ECO:0000269" key="8">
    <source>
    </source>
</evidence>
<evidence type="ECO:0000269" key="9">
    <source>
    </source>
</evidence>
<evidence type="ECO:0000269" key="10">
    <source>
    </source>
</evidence>
<evidence type="ECO:0000305" key="11"/>
<name>LUM_HUMAN</name>
<organism>
    <name type="scientific">Homo sapiens</name>
    <name type="common">Human</name>
    <dbReference type="NCBI Taxonomy" id="9606"/>
    <lineage>
        <taxon>Eukaryota</taxon>
        <taxon>Metazoa</taxon>
        <taxon>Chordata</taxon>
        <taxon>Craniata</taxon>
        <taxon>Vertebrata</taxon>
        <taxon>Euteleostomi</taxon>
        <taxon>Mammalia</taxon>
        <taxon>Eutheria</taxon>
        <taxon>Euarchontoglires</taxon>
        <taxon>Primates</taxon>
        <taxon>Haplorrhini</taxon>
        <taxon>Catarrhini</taxon>
        <taxon>Hominidae</taxon>
        <taxon>Homo</taxon>
    </lineage>
</organism>
<sequence length="338" mass="38429">MSLSAFTLFLALIGGTSGQYYDYDFPLSIYGQSSPNCAPECNCPESYPSAMYCDELKLKSVPMVPPGIKYLYLRNNQIDHIDEKAFENVTDLQWLILDHNLLENSKIKGRVFSKLKQLKKLHINHNNLTESVGPLPKSLEDLQLTHNKITKLGSFEGLVNLTFIHLQHNRLKEDAVSAAFKGLKSLEYLDLSFNQIARLPSGLPVSLLTLYLDNNKISNIPDEYFKRFNALQYLRLSHNELADSGIPGNSFNVSSLVELDLSYNKLKNIPTVNENLENYYLEVNQLEKFDIKSFCKILGPLSYSKIKHLRLDGNRISETSLPPDMYECLRVANEVTLN</sequence>